<sequence>MMDVLMYLFETYIHSDIELTVDQEKLEDELLKAGFHQEAIYKALDWLEDLAHLQETDSHEHIAKSTSTAMRIYTQQEIDGIDTVCRGFLLFLEQIKVLTCETREMVIEQVMTLETEDLSLDDLKWVILMVLFNVPGQESAYTQMEELLYTSDTGMTH</sequence>
<dbReference type="EMBL" id="FM178379">
    <property type="protein sequence ID" value="CAQ77763.1"/>
    <property type="molecule type" value="Genomic_DNA"/>
</dbReference>
<dbReference type="RefSeq" id="WP_012548974.1">
    <property type="nucleotide sequence ID" value="NC_011312.1"/>
</dbReference>
<dbReference type="SMR" id="B6EP24"/>
<dbReference type="KEGG" id="vsa:VSAL_I0078"/>
<dbReference type="eggNOG" id="COG2922">
    <property type="taxonomic scope" value="Bacteria"/>
</dbReference>
<dbReference type="HOGENOM" id="CLU_133242_0_0_6"/>
<dbReference type="Proteomes" id="UP000001730">
    <property type="component" value="Chromosome 1"/>
</dbReference>
<dbReference type="HAMAP" id="MF_00598">
    <property type="entry name" value="Smg"/>
    <property type="match status" value="1"/>
</dbReference>
<dbReference type="InterPro" id="IPR007456">
    <property type="entry name" value="Smg"/>
</dbReference>
<dbReference type="NCBIfam" id="NF002897">
    <property type="entry name" value="PRK03430.1"/>
    <property type="match status" value="1"/>
</dbReference>
<dbReference type="PANTHER" id="PTHR38692">
    <property type="entry name" value="PROTEIN SMG"/>
    <property type="match status" value="1"/>
</dbReference>
<dbReference type="PANTHER" id="PTHR38692:SF1">
    <property type="entry name" value="PROTEIN SMG"/>
    <property type="match status" value="1"/>
</dbReference>
<dbReference type="Pfam" id="PF04361">
    <property type="entry name" value="DUF494"/>
    <property type="match status" value="1"/>
</dbReference>
<organism>
    <name type="scientific">Aliivibrio salmonicida (strain LFI1238)</name>
    <name type="common">Vibrio salmonicida (strain LFI1238)</name>
    <dbReference type="NCBI Taxonomy" id="316275"/>
    <lineage>
        <taxon>Bacteria</taxon>
        <taxon>Pseudomonadati</taxon>
        <taxon>Pseudomonadota</taxon>
        <taxon>Gammaproteobacteria</taxon>
        <taxon>Vibrionales</taxon>
        <taxon>Vibrionaceae</taxon>
        <taxon>Aliivibrio</taxon>
    </lineage>
</organism>
<proteinExistence type="inferred from homology"/>
<gene>
    <name evidence="1" type="primary">smg</name>
    <name type="ordered locus">VSAL_I0078</name>
</gene>
<evidence type="ECO:0000255" key="1">
    <source>
        <dbReference type="HAMAP-Rule" id="MF_00598"/>
    </source>
</evidence>
<reference key="1">
    <citation type="journal article" date="2008" name="BMC Genomics">
        <title>The genome sequence of the fish pathogen Aliivibrio salmonicida strain LFI1238 shows extensive evidence of gene decay.</title>
        <authorList>
            <person name="Hjerde E."/>
            <person name="Lorentzen M.S."/>
            <person name="Holden M.T."/>
            <person name="Seeger K."/>
            <person name="Paulsen S."/>
            <person name="Bason N."/>
            <person name="Churcher C."/>
            <person name="Harris D."/>
            <person name="Norbertczak H."/>
            <person name="Quail M.A."/>
            <person name="Sanders S."/>
            <person name="Thurston S."/>
            <person name="Parkhill J."/>
            <person name="Willassen N.P."/>
            <person name="Thomson N.R."/>
        </authorList>
    </citation>
    <scope>NUCLEOTIDE SEQUENCE [LARGE SCALE GENOMIC DNA]</scope>
    <source>
        <strain>LFI1238</strain>
    </source>
</reference>
<protein>
    <recommendedName>
        <fullName evidence="1">Protein Smg homolog</fullName>
    </recommendedName>
</protein>
<name>SMG_ALISL</name>
<comment type="similarity">
    <text evidence="1">Belongs to the Smg family.</text>
</comment>
<accession>B6EP24</accession>
<feature type="chain" id="PRO_1000129881" description="Protein Smg homolog">
    <location>
        <begin position="1"/>
        <end position="157"/>
    </location>
</feature>